<reference key="1">
    <citation type="journal article" date="2005" name="Genome Res.">
        <title>Comparative and functional genomic analyses of the pathogenicity of phytopathogen Xanthomonas campestris pv. campestris.</title>
        <authorList>
            <person name="Qian W."/>
            <person name="Jia Y."/>
            <person name="Ren S.-X."/>
            <person name="He Y.-Q."/>
            <person name="Feng J.-X."/>
            <person name="Lu L.-F."/>
            <person name="Sun Q."/>
            <person name="Ying G."/>
            <person name="Tang D.-J."/>
            <person name="Tang H."/>
            <person name="Wu W."/>
            <person name="Hao P."/>
            <person name="Wang L."/>
            <person name="Jiang B.-L."/>
            <person name="Zeng S."/>
            <person name="Gu W.-Y."/>
            <person name="Lu G."/>
            <person name="Rong L."/>
            <person name="Tian Y."/>
            <person name="Yao Z."/>
            <person name="Fu G."/>
            <person name="Chen B."/>
            <person name="Fang R."/>
            <person name="Qiang B."/>
            <person name="Chen Z."/>
            <person name="Zhao G.-P."/>
            <person name="Tang J.-L."/>
            <person name="He C."/>
        </authorList>
    </citation>
    <scope>NUCLEOTIDE SEQUENCE [LARGE SCALE GENOMIC DNA]</scope>
    <source>
        <strain>8004</strain>
    </source>
</reference>
<protein>
    <recommendedName>
        <fullName evidence="1">Phosphatidylserine decarboxylase proenzyme</fullName>
        <ecNumber evidence="1">4.1.1.65</ecNumber>
    </recommendedName>
    <component>
        <recommendedName>
            <fullName evidence="1">Phosphatidylserine decarboxylase alpha chain</fullName>
        </recommendedName>
    </component>
    <component>
        <recommendedName>
            <fullName evidence="1">Phosphatidylserine decarboxylase beta chain</fullName>
        </recommendedName>
    </component>
</protein>
<name>PSD_XANC8</name>
<accession>Q4UWE4</accession>
<sequence length="282" mass="30850">MSLVTSLTYVLPHRLLSSLARALAYSKSPATKQWLIDTVTRKFGVDLSEAQEPDPRVYPTFNAFFTRALKPGARVPDADPQALLMPADGRISQLGPIENGRIFQAKGQSFTAAELLGDESAAVPFHNGLFATVYLSPKDYHRVHMPWSGTLRETVHVPGRLFSVGPDAVRNVPRLFARNERLVCHFDTDFGPMASVMVGALLVSGVETVWSGVEIPRYGDRITRKDYRGKGITLERFAEMARFNYGSTVIVLLPPGVAALEGGLAAESSVRLGQALARRQVA</sequence>
<feature type="chain" id="PRO_0000262167" description="Phosphatidylserine decarboxylase beta chain" evidence="1">
    <location>
        <begin position="1"/>
        <end position="246"/>
    </location>
</feature>
<feature type="chain" id="PRO_0000262168" description="Phosphatidylserine decarboxylase alpha chain" evidence="1">
    <location>
        <begin position="247"/>
        <end position="282"/>
    </location>
</feature>
<feature type="active site" description="Charge relay system; for autoendoproteolytic cleavage activity" evidence="1">
    <location>
        <position position="88"/>
    </location>
</feature>
<feature type="active site" description="Charge relay system; for autoendoproteolytic cleavage activity" evidence="1">
    <location>
        <position position="144"/>
    </location>
</feature>
<feature type="active site" description="Charge relay system; for autoendoproteolytic cleavage activity" evidence="1">
    <location>
        <position position="247"/>
    </location>
</feature>
<feature type="active site" description="Schiff-base intermediate with substrate; via pyruvic acid; for decarboxylase activity" evidence="1">
    <location>
        <position position="247"/>
    </location>
</feature>
<feature type="site" description="Cleavage (non-hydrolytic); by autocatalysis" evidence="1">
    <location>
        <begin position="246"/>
        <end position="247"/>
    </location>
</feature>
<feature type="modified residue" description="Pyruvic acid (Ser); by autocatalysis" evidence="1">
    <location>
        <position position="247"/>
    </location>
</feature>
<proteinExistence type="inferred from homology"/>
<dbReference type="EC" id="4.1.1.65" evidence="1"/>
<dbReference type="EMBL" id="CP000050">
    <property type="protein sequence ID" value="AAY48629.1"/>
    <property type="molecule type" value="Genomic_DNA"/>
</dbReference>
<dbReference type="SMR" id="Q4UWE4"/>
<dbReference type="KEGG" id="xcb:XC_1563"/>
<dbReference type="HOGENOM" id="CLU_029061_4_1_6"/>
<dbReference type="UniPathway" id="UPA00558">
    <property type="reaction ID" value="UER00616"/>
</dbReference>
<dbReference type="Proteomes" id="UP000000420">
    <property type="component" value="Chromosome"/>
</dbReference>
<dbReference type="GO" id="GO:0005886">
    <property type="term" value="C:plasma membrane"/>
    <property type="evidence" value="ECO:0007669"/>
    <property type="project" value="UniProtKB-SubCell"/>
</dbReference>
<dbReference type="GO" id="GO:0004609">
    <property type="term" value="F:phosphatidylserine decarboxylase activity"/>
    <property type="evidence" value="ECO:0007669"/>
    <property type="project" value="UniProtKB-UniRule"/>
</dbReference>
<dbReference type="GO" id="GO:0006646">
    <property type="term" value="P:phosphatidylethanolamine biosynthetic process"/>
    <property type="evidence" value="ECO:0007669"/>
    <property type="project" value="UniProtKB-UniRule"/>
</dbReference>
<dbReference type="HAMAP" id="MF_00662">
    <property type="entry name" value="PS_decarb_PSD_B_type1"/>
    <property type="match status" value="1"/>
</dbReference>
<dbReference type="InterPro" id="IPR003817">
    <property type="entry name" value="PS_Dcarbxylase"/>
</dbReference>
<dbReference type="InterPro" id="IPR033177">
    <property type="entry name" value="PSD-B"/>
</dbReference>
<dbReference type="InterPro" id="IPR033178">
    <property type="entry name" value="PSD_type1_pro"/>
</dbReference>
<dbReference type="NCBIfam" id="TIGR00163">
    <property type="entry name" value="PS_decarb"/>
    <property type="match status" value="1"/>
</dbReference>
<dbReference type="PANTHER" id="PTHR10067">
    <property type="entry name" value="PHOSPHATIDYLSERINE DECARBOXYLASE"/>
    <property type="match status" value="1"/>
</dbReference>
<dbReference type="PANTHER" id="PTHR10067:SF6">
    <property type="entry name" value="PHOSPHATIDYLSERINE DECARBOXYLASE PROENZYME, MITOCHONDRIAL"/>
    <property type="match status" value="1"/>
</dbReference>
<dbReference type="Pfam" id="PF02666">
    <property type="entry name" value="PS_Dcarbxylase"/>
    <property type="match status" value="1"/>
</dbReference>
<gene>
    <name evidence="1" type="primary">psd</name>
    <name type="ordered locus">XC_1563</name>
</gene>
<comment type="function">
    <text evidence="1">Catalyzes the formation of phosphatidylethanolamine (PtdEtn) from phosphatidylserine (PtdSer).</text>
</comment>
<comment type="catalytic activity">
    <reaction evidence="1">
        <text>a 1,2-diacyl-sn-glycero-3-phospho-L-serine + H(+) = a 1,2-diacyl-sn-glycero-3-phosphoethanolamine + CO2</text>
        <dbReference type="Rhea" id="RHEA:20828"/>
        <dbReference type="ChEBI" id="CHEBI:15378"/>
        <dbReference type="ChEBI" id="CHEBI:16526"/>
        <dbReference type="ChEBI" id="CHEBI:57262"/>
        <dbReference type="ChEBI" id="CHEBI:64612"/>
        <dbReference type="EC" id="4.1.1.65"/>
    </reaction>
</comment>
<comment type="cofactor">
    <cofactor evidence="1">
        <name>pyruvate</name>
        <dbReference type="ChEBI" id="CHEBI:15361"/>
    </cofactor>
    <text evidence="1">Binds 1 pyruvoyl group covalently per subunit.</text>
</comment>
<comment type="pathway">
    <text evidence="1">Phospholipid metabolism; phosphatidylethanolamine biosynthesis; phosphatidylethanolamine from CDP-diacylglycerol: step 2/2.</text>
</comment>
<comment type="subunit">
    <text evidence="1">Heterodimer of a large membrane-associated beta subunit and a small pyruvoyl-containing alpha subunit.</text>
</comment>
<comment type="subcellular location">
    <subcellularLocation>
        <location evidence="1">Cell membrane</location>
        <topology evidence="1">Peripheral membrane protein</topology>
    </subcellularLocation>
</comment>
<comment type="PTM">
    <text evidence="1">Is synthesized initially as an inactive proenzyme. Formation of the active enzyme involves a self-maturation process in which the active site pyruvoyl group is generated from an internal serine residue via an autocatalytic post-translational modification. Two non-identical subunits are generated from the proenzyme in this reaction, and the pyruvate is formed at the N-terminus of the alpha chain, which is derived from the carboxyl end of the proenzyme. The autoendoproteolytic cleavage occurs by a canonical serine protease mechanism, in which the side chain hydroxyl group of the serine supplies its oxygen atom to form the C-terminus of the beta chain, while the remainder of the serine residue undergoes an oxidative deamination to produce ammonia and the pyruvoyl prosthetic group on the alpha chain. During this reaction, the Ser that is part of the protease active site of the proenzyme becomes the pyruvoyl prosthetic group, which constitutes an essential element of the active site of the mature decarboxylase.</text>
</comment>
<comment type="similarity">
    <text evidence="1">Belongs to the phosphatidylserine decarboxylase family. PSD-B subfamily. Prokaryotic type I sub-subfamily.</text>
</comment>
<organism>
    <name type="scientific">Xanthomonas campestris pv. campestris (strain 8004)</name>
    <dbReference type="NCBI Taxonomy" id="314565"/>
    <lineage>
        <taxon>Bacteria</taxon>
        <taxon>Pseudomonadati</taxon>
        <taxon>Pseudomonadota</taxon>
        <taxon>Gammaproteobacteria</taxon>
        <taxon>Lysobacterales</taxon>
        <taxon>Lysobacteraceae</taxon>
        <taxon>Xanthomonas</taxon>
    </lineage>
</organism>
<keyword id="KW-1003">Cell membrane</keyword>
<keyword id="KW-0210">Decarboxylase</keyword>
<keyword id="KW-0444">Lipid biosynthesis</keyword>
<keyword id="KW-0443">Lipid metabolism</keyword>
<keyword id="KW-0456">Lyase</keyword>
<keyword id="KW-0472">Membrane</keyword>
<keyword id="KW-0594">Phospholipid biosynthesis</keyword>
<keyword id="KW-1208">Phospholipid metabolism</keyword>
<keyword id="KW-0670">Pyruvate</keyword>
<keyword id="KW-0865">Zymogen</keyword>
<evidence type="ECO:0000255" key="1">
    <source>
        <dbReference type="HAMAP-Rule" id="MF_00662"/>
    </source>
</evidence>